<organism>
    <name type="scientific">Corynebacterium glutamicum (strain R)</name>
    <dbReference type="NCBI Taxonomy" id="340322"/>
    <lineage>
        <taxon>Bacteria</taxon>
        <taxon>Bacillati</taxon>
        <taxon>Actinomycetota</taxon>
        <taxon>Actinomycetes</taxon>
        <taxon>Mycobacteriales</taxon>
        <taxon>Corynebacteriaceae</taxon>
        <taxon>Corynebacterium</taxon>
    </lineage>
</organism>
<gene>
    <name evidence="1" type="primary">ureF</name>
    <name type="ordered locus">cgR_0107</name>
</gene>
<comment type="function">
    <text evidence="1">Required for maturation of urease via the functional incorporation of the urease nickel metallocenter.</text>
</comment>
<comment type="subunit">
    <text evidence="1">UreD, UreF and UreG form a complex that acts as a GTP-hydrolysis-dependent molecular chaperone, activating the urease apoprotein by helping to assemble the nickel containing metallocenter of UreC. The UreE protein probably delivers the nickel.</text>
</comment>
<comment type="subcellular location">
    <subcellularLocation>
        <location evidence="1">Cytoplasm</location>
    </subcellularLocation>
</comment>
<comment type="similarity">
    <text evidence="1">Belongs to the UreF family.</text>
</comment>
<dbReference type="EMBL" id="AP009044">
    <property type="protein sequence ID" value="BAF53068.1"/>
    <property type="molecule type" value="Genomic_DNA"/>
</dbReference>
<dbReference type="RefSeq" id="WP_011896413.1">
    <property type="nucleotide sequence ID" value="NC_009342.1"/>
</dbReference>
<dbReference type="SMR" id="A4QA25"/>
<dbReference type="KEGG" id="cgt:cgR_0107"/>
<dbReference type="HOGENOM" id="CLU_049215_4_2_11"/>
<dbReference type="PhylomeDB" id="A4QA25"/>
<dbReference type="Proteomes" id="UP000006698">
    <property type="component" value="Chromosome"/>
</dbReference>
<dbReference type="GO" id="GO:0005737">
    <property type="term" value="C:cytoplasm"/>
    <property type="evidence" value="ECO:0007669"/>
    <property type="project" value="UniProtKB-SubCell"/>
</dbReference>
<dbReference type="GO" id="GO:0016151">
    <property type="term" value="F:nickel cation binding"/>
    <property type="evidence" value="ECO:0007669"/>
    <property type="project" value="UniProtKB-UniRule"/>
</dbReference>
<dbReference type="Gene3D" id="1.10.4190.10">
    <property type="entry name" value="Urease accessory protein UreF"/>
    <property type="match status" value="1"/>
</dbReference>
<dbReference type="HAMAP" id="MF_01385">
    <property type="entry name" value="UreF"/>
    <property type="match status" value="1"/>
</dbReference>
<dbReference type="InterPro" id="IPR002639">
    <property type="entry name" value="UreF"/>
</dbReference>
<dbReference type="InterPro" id="IPR038277">
    <property type="entry name" value="UreF_sf"/>
</dbReference>
<dbReference type="PANTHER" id="PTHR33620">
    <property type="entry name" value="UREASE ACCESSORY PROTEIN F"/>
    <property type="match status" value="1"/>
</dbReference>
<dbReference type="PANTHER" id="PTHR33620:SF1">
    <property type="entry name" value="UREASE ACCESSORY PROTEIN F"/>
    <property type="match status" value="1"/>
</dbReference>
<dbReference type="Pfam" id="PF01730">
    <property type="entry name" value="UreF"/>
    <property type="match status" value="1"/>
</dbReference>
<dbReference type="PIRSF" id="PIRSF009467">
    <property type="entry name" value="Ureas_acces_UreF"/>
    <property type="match status" value="1"/>
</dbReference>
<proteinExistence type="inferred from homology"/>
<accession>A4QA25</accession>
<keyword id="KW-0143">Chaperone</keyword>
<keyword id="KW-0963">Cytoplasm</keyword>
<keyword id="KW-0996">Nickel insertion</keyword>
<feature type="chain" id="PRO_0000344117" description="Urease accessory protein UreF">
    <location>
        <begin position="1"/>
        <end position="226"/>
    </location>
</feature>
<reference key="1">
    <citation type="journal article" date="2007" name="Microbiology">
        <title>Comparative analysis of the Corynebacterium glutamicum group and complete genome sequence of strain R.</title>
        <authorList>
            <person name="Yukawa H."/>
            <person name="Omumasaba C.A."/>
            <person name="Nonaka H."/>
            <person name="Kos P."/>
            <person name="Okai N."/>
            <person name="Suzuki N."/>
            <person name="Suda M."/>
            <person name="Tsuge Y."/>
            <person name="Watanabe J."/>
            <person name="Ikeda Y."/>
            <person name="Vertes A.A."/>
            <person name="Inui M."/>
        </authorList>
    </citation>
    <scope>NUCLEOTIDE SEQUENCE [LARGE SCALE GENOMIC DNA]</scope>
    <source>
        <strain>R</strain>
    </source>
</reference>
<sequence length="226" mass="24968">MDLDADFLLLHLSDSALPTGAFAHSFGFETYMDAERITNAEEFQDWLKVLLKVQLTSSDALAMRMFYATPTASELKRLDERLFAGTPAREVREANARMGTRMAEIVAETYSVPLIIEYLELIKNRELSGHPALALALATHSMGIDVDRAIHAHLTATVSSLIQNAVRGIPLGQMAGQRVMFAMREHIGAAVKRSAMLDAIDFCSGDPGLDISQMVHETQRARLFMS</sequence>
<evidence type="ECO:0000255" key="1">
    <source>
        <dbReference type="HAMAP-Rule" id="MF_01385"/>
    </source>
</evidence>
<protein>
    <recommendedName>
        <fullName evidence="1">Urease accessory protein UreF</fullName>
    </recommendedName>
</protein>
<name>UREF_CORGB</name>